<evidence type="ECO:0000250" key="1"/>
<evidence type="ECO:0000250" key="2">
    <source>
        <dbReference type="UniProtKB" id="P21752"/>
    </source>
</evidence>
<evidence type="ECO:0000250" key="3">
    <source>
        <dbReference type="UniProtKB" id="P63312"/>
    </source>
</evidence>
<evidence type="ECO:0000250" key="4">
    <source>
        <dbReference type="UniProtKB" id="P63313"/>
    </source>
</evidence>
<evidence type="ECO:0000256" key="5">
    <source>
        <dbReference type="SAM" id="MobiDB-lite"/>
    </source>
</evidence>
<evidence type="ECO:0000305" key="6"/>
<evidence type="ECO:0007744" key="7">
    <source>
    </source>
</evidence>
<sequence length="44" mass="5026">MADKPDMGEIASFDKAKLKKTETQEKNTLPTKETIEQEKRSEIS</sequence>
<gene>
    <name type="primary">Tmsb10</name>
    <name type="synonym">Ptmb10</name>
</gene>
<accession>Q6ZWY8</accession>
<accession>Q3V2M3</accession>
<name>TYB10_MOUSE</name>
<feature type="initiator methionine" description="Removed" evidence="2">
    <location>
        <position position="1"/>
    </location>
</feature>
<feature type="chain" id="PRO_0000045932" description="Thymosin beta-10">
    <location>
        <begin position="2"/>
        <end position="44"/>
    </location>
</feature>
<feature type="region of interest" description="Disordered" evidence="5">
    <location>
        <begin position="1"/>
        <end position="44"/>
    </location>
</feature>
<feature type="compositionally biased region" description="Basic and acidic residues" evidence="5">
    <location>
        <begin position="1"/>
        <end position="25"/>
    </location>
</feature>
<feature type="compositionally biased region" description="Basic and acidic residues" evidence="5">
    <location>
        <begin position="33"/>
        <end position="44"/>
    </location>
</feature>
<feature type="modified residue" description="N-acetylalanine" evidence="2">
    <location>
        <position position="2"/>
    </location>
</feature>
<feature type="modified residue" description="N6-acetyllysine" evidence="4">
    <location>
        <position position="4"/>
    </location>
</feature>
<feature type="modified residue" description="Phosphoserine" evidence="4">
    <location>
        <position position="12"/>
    </location>
</feature>
<feature type="modified residue" description="N6-acetyllysine" evidence="4">
    <location>
        <position position="15"/>
    </location>
</feature>
<feature type="modified residue" description="Phosphothreonine" evidence="7">
    <location>
        <position position="21"/>
    </location>
</feature>
<feature type="modified residue" description="Phosphothreonine" evidence="4">
    <location>
        <position position="23"/>
    </location>
</feature>
<feature type="modified residue" description="Phosphothreonine" evidence="4">
    <location>
        <position position="34"/>
    </location>
</feature>
<feature type="modified residue" description="N6-acetyllysine" evidence="4">
    <location>
        <position position="39"/>
    </location>
</feature>
<feature type="modified residue" description="Phosphoserine" evidence="3">
    <location>
        <position position="41"/>
    </location>
</feature>
<comment type="function">
    <text evidence="1">Plays an important role in the organization of the cytoskeleton. Binds to and sequesters actin monomers (G actin) and therefore inhibits actin polymerization (By similarity).</text>
</comment>
<comment type="subcellular location">
    <subcellularLocation>
        <location evidence="1">Cytoplasm</location>
        <location evidence="1">Cytoskeleton</location>
    </subcellularLocation>
</comment>
<comment type="similarity">
    <text evidence="6">Belongs to the thymosin beta family.</text>
</comment>
<reference key="1">
    <citation type="journal article" date="2005" name="Science">
        <title>The transcriptional landscape of the mammalian genome.</title>
        <authorList>
            <person name="Carninci P."/>
            <person name="Kasukawa T."/>
            <person name="Katayama S."/>
            <person name="Gough J."/>
            <person name="Frith M.C."/>
            <person name="Maeda N."/>
            <person name="Oyama R."/>
            <person name="Ravasi T."/>
            <person name="Lenhard B."/>
            <person name="Wells C."/>
            <person name="Kodzius R."/>
            <person name="Shimokawa K."/>
            <person name="Bajic V.B."/>
            <person name="Brenner S.E."/>
            <person name="Batalov S."/>
            <person name="Forrest A.R."/>
            <person name="Zavolan M."/>
            <person name="Davis M.J."/>
            <person name="Wilming L.G."/>
            <person name="Aidinis V."/>
            <person name="Allen J.E."/>
            <person name="Ambesi-Impiombato A."/>
            <person name="Apweiler R."/>
            <person name="Aturaliya R.N."/>
            <person name="Bailey T.L."/>
            <person name="Bansal M."/>
            <person name="Baxter L."/>
            <person name="Beisel K.W."/>
            <person name="Bersano T."/>
            <person name="Bono H."/>
            <person name="Chalk A.M."/>
            <person name="Chiu K.P."/>
            <person name="Choudhary V."/>
            <person name="Christoffels A."/>
            <person name="Clutterbuck D.R."/>
            <person name="Crowe M.L."/>
            <person name="Dalla E."/>
            <person name="Dalrymple B.P."/>
            <person name="de Bono B."/>
            <person name="Della Gatta G."/>
            <person name="di Bernardo D."/>
            <person name="Down T."/>
            <person name="Engstrom P."/>
            <person name="Fagiolini M."/>
            <person name="Faulkner G."/>
            <person name="Fletcher C.F."/>
            <person name="Fukushima T."/>
            <person name="Furuno M."/>
            <person name="Futaki S."/>
            <person name="Gariboldi M."/>
            <person name="Georgii-Hemming P."/>
            <person name="Gingeras T.R."/>
            <person name="Gojobori T."/>
            <person name="Green R.E."/>
            <person name="Gustincich S."/>
            <person name="Harbers M."/>
            <person name="Hayashi Y."/>
            <person name="Hensch T.K."/>
            <person name="Hirokawa N."/>
            <person name="Hill D."/>
            <person name="Huminiecki L."/>
            <person name="Iacono M."/>
            <person name="Ikeo K."/>
            <person name="Iwama A."/>
            <person name="Ishikawa T."/>
            <person name="Jakt M."/>
            <person name="Kanapin A."/>
            <person name="Katoh M."/>
            <person name="Kawasawa Y."/>
            <person name="Kelso J."/>
            <person name="Kitamura H."/>
            <person name="Kitano H."/>
            <person name="Kollias G."/>
            <person name="Krishnan S.P."/>
            <person name="Kruger A."/>
            <person name="Kummerfeld S.K."/>
            <person name="Kurochkin I.V."/>
            <person name="Lareau L.F."/>
            <person name="Lazarevic D."/>
            <person name="Lipovich L."/>
            <person name="Liu J."/>
            <person name="Liuni S."/>
            <person name="McWilliam S."/>
            <person name="Madan Babu M."/>
            <person name="Madera M."/>
            <person name="Marchionni L."/>
            <person name="Matsuda H."/>
            <person name="Matsuzawa S."/>
            <person name="Miki H."/>
            <person name="Mignone F."/>
            <person name="Miyake S."/>
            <person name="Morris K."/>
            <person name="Mottagui-Tabar S."/>
            <person name="Mulder N."/>
            <person name="Nakano N."/>
            <person name="Nakauchi H."/>
            <person name="Ng P."/>
            <person name="Nilsson R."/>
            <person name="Nishiguchi S."/>
            <person name="Nishikawa S."/>
            <person name="Nori F."/>
            <person name="Ohara O."/>
            <person name="Okazaki Y."/>
            <person name="Orlando V."/>
            <person name="Pang K.C."/>
            <person name="Pavan W.J."/>
            <person name="Pavesi G."/>
            <person name="Pesole G."/>
            <person name="Petrovsky N."/>
            <person name="Piazza S."/>
            <person name="Reed J."/>
            <person name="Reid J.F."/>
            <person name="Ring B.Z."/>
            <person name="Ringwald M."/>
            <person name="Rost B."/>
            <person name="Ruan Y."/>
            <person name="Salzberg S.L."/>
            <person name="Sandelin A."/>
            <person name="Schneider C."/>
            <person name="Schoenbach C."/>
            <person name="Sekiguchi K."/>
            <person name="Semple C.A."/>
            <person name="Seno S."/>
            <person name="Sessa L."/>
            <person name="Sheng Y."/>
            <person name="Shibata Y."/>
            <person name="Shimada H."/>
            <person name="Shimada K."/>
            <person name="Silva D."/>
            <person name="Sinclair B."/>
            <person name="Sperling S."/>
            <person name="Stupka E."/>
            <person name="Sugiura K."/>
            <person name="Sultana R."/>
            <person name="Takenaka Y."/>
            <person name="Taki K."/>
            <person name="Tammoja K."/>
            <person name="Tan S.L."/>
            <person name="Tang S."/>
            <person name="Taylor M.S."/>
            <person name="Tegner J."/>
            <person name="Teichmann S.A."/>
            <person name="Ueda H.R."/>
            <person name="van Nimwegen E."/>
            <person name="Verardo R."/>
            <person name="Wei C.L."/>
            <person name="Yagi K."/>
            <person name="Yamanishi H."/>
            <person name="Zabarovsky E."/>
            <person name="Zhu S."/>
            <person name="Zimmer A."/>
            <person name="Hide W."/>
            <person name="Bult C."/>
            <person name="Grimmond S.M."/>
            <person name="Teasdale R.D."/>
            <person name="Liu E.T."/>
            <person name="Brusic V."/>
            <person name="Quackenbush J."/>
            <person name="Wahlestedt C."/>
            <person name="Mattick J.S."/>
            <person name="Hume D.A."/>
            <person name="Kai C."/>
            <person name="Sasaki D."/>
            <person name="Tomaru Y."/>
            <person name="Fukuda S."/>
            <person name="Kanamori-Katayama M."/>
            <person name="Suzuki M."/>
            <person name="Aoki J."/>
            <person name="Arakawa T."/>
            <person name="Iida J."/>
            <person name="Imamura K."/>
            <person name="Itoh M."/>
            <person name="Kato T."/>
            <person name="Kawaji H."/>
            <person name="Kawagashira N."/>
            <person name="Kawashima T."/>
            <person name="Kojima M."/>
            <person name="Kondo S."/>
            <person name="Konno H."/>
            <person name="Nakano K."/>
            <person name="Ninomiya N."/>
            <person name="Nishio T."/>
            <person name="Okada M."/>
            <person name="Plessy C."/>
            <person name="Shibata K."/>
            <person name="Shiraki T."/>
            <person name="Suzuki S."/>
            <person name="Tagami M."/>
            <person name="Waki K."/>
            <person name="Watahiki A."/>
            <person name="Okamura-Oho Y."/>
            <person name="Suzuki H."/>
            <person name="Kawai J."/>
            <person name="Hayashizaki Y."/>
        </authorList>
    </citation>
    <scope>NUCLEOTIDE SEQUENCE [LARGE SCALE MRNA]</scope>
    <source>
        <strain>C57BL/6J</strain>
        <tissue>Placenta</tissue>
        <tissue>Small intestine</tissue>
        <tissue>Testis</tissue>
        <tissue>Wolffian duct</tissue>
    </source>
</reference>
<reference key="2">
    <citation type="journal article" date="2010" name="Cell">
        <title>A tissue-specific atlas of mouse protein phosphorylation and expression.</title>
        <authorList>
            <person name="Huttlin E.L."/>
            <person name="Jedrychowski M.P."/>
            <person name="Elias J.E."/>
            <person name="Goswami T."/>
            <person name="Rad R."/>
            <person name="Beausoleil S.A."/>
            <person name="Villen J."/>
            <person name="Haas W."/>
            <person name="Sowa M.E."/>
            <person name="Gygi S.P."/>
        </authorList>
    </citation>
    <scope>PHOSPHORYLATION [LARGE SCALE ANALYSIS] AT THR-21</scope>
    <scope>IDENTIFICATION BY MASS SPECTROMETRY [LARGE SCALE ANALYSIS]</scope>
    <source>
        <tissue>Brain</tissue>
    </source>
</reference>
<organism>
    <name type="scientific">Mus musculus</name>
    <name type="common">Mouse</name>
    <dbReference type="NCBI Taxonomy" id="10090"/>
    <lineage>
        <taxon>Eukaryota</taxon>
        <taxon>Metazoa</taxon>
        <taxon>Chordata</taxon>
        <taxon>Craniata</taxon>
        <taxon>Vertebrata</taxon>
        <taxon>Euteleostomi</taxon>
        <taxon>Mammalia</taxon>
        <taxon>Eutheria</taxon>
        <taxon>Euarchontoglires</taxon>
        <taxon>Glires</taxon>
        <taxon>Rodentia</taxon>
        <taxon>Myomorpha</taxon>
        <taxon>Muroidea</taxon>
        <taxon>Muridae</taxon>
        <taxon>Murinae</taxon>
        <taxon>Mus</taxon>
        <taxon>Mus</taxon>
    </lineage>
</organism>
<keyword id="KW-0007">Acetylation</keyword>
<keyword id="KW-0009">Actin-binding</keyword>
<keyword id="KW-0963">Cytoplasm</keyword>
<keyword id="KW-0206">Cytoskeleton</keyword>
<keyword id="KW-0597">Phosphoprotein</keyword>
<keyword id="KW-1185">Reference proteome</keyword>
<dbReference type="EMBL" id="AK003178">
    <property type="protein sequence ID" value="BAB22622.1"/>
    <property type="molecule type" value="mRNA"/>
</dbReference>
<dbReference type="EMBL" id="AK005512">
    <property type="protein sequence ID" value="BAB24091.1"/>
    <property type="molecule type" value="mRNA"/>
</dbReference>
<dbReference type="EMBL" id="AK008557">
    <property type="protein sequence ID" value="BAB25742.1"/>
    <property type="molecule type" value="mRNA"/>
</dbReference>
<dbReference type="EMBL" id="AK012361">
    <property type="protein sequence ID" value="BAB28189.1"/>
    <property type="molecule type" value="mRNA"/>
</dbReference>
<dbReference type="EMBL" id="AK019212">
    <property type="protein sequence ID" value="BAB31603.1"/>
    <property type="molecule type" value="mRNA"/>
</dbReference>
<dbReference type="EMBL" id="AK019232">
    <property type="protein sequence ID" value="BAB31614.1"/>
    <property type="molecule type" value="mRNA"/>
</dbReference>
<dbReference type="EMBL" id="AK131711">
    <property type="protein sequence ID" value="BAE20774.1"/>
    <property type="molecule type" value="mRNA"/>
</dbReference>
<dbReference type="EMBL" id="AK161987">
    <property type="protein sequence ID" value="BAE36668.1"/>
    <property type="molecule type" value="mRNA"/>
</dbReference>
<dbReference type="CCDS" id="CCDS39519.1"/>
<dbReference type="RefSeq" id="NP_001034481.1">
    <property type="nucleotide sequence ID" value="NM_001039392.3"/>
</dbReference>
<dbReference type="RefSeq" id="NP_001177256.1">
    <property type="nucleotide sequence ID" value="NM_001190327.1"/>
</dbReference>
<dbReference type="RefSeq" id="NP_079560.1">
    <property type="nucleotide sequence ID" value="NM_025284.5"/>
</dbReference>
<dbReference type="SMR" id="Q6ZWY8"/>
<dbReference type="BioGRID" id="202470">
    <property type="interactions" value="2"/>
</dbReference>
<dbReference type="FunCoup" id="Q6ZWY8">
    <property type="interactions" value="316"/>
</dbReference>
<dbReference type="STRING" id="10090.ENSMUSP00000109683"/>
<dbReference type="GlyGen" id="Q6ZWY8">
    <property type="glycosylation" value="1 site, 1 O-linked glycan (1 site)"/>
</dbReference>
<dbReference type="iPTMnet" id="Q6ZWY8"/>
<dbReference type="PhosphoSitePlus" id="Q6ZWY8"/>
<dbReference type="jPOST" id="Q6ZWY8"/>
<dbReference type="PaxDb" id="10090-ENSMUSP00000109683"/>
<dbReference type="ProteomicsDB" id="297760"/>
<dbReference type="Pumba" id="Q6ZWY8"/>
<dbReference type="Antibodypedia" id="16880">
    <property type="antibodies" value="105 antibodies from 19 providers"/>
</dbReference>
<dbReference type="DNASU" id="19240"/>
<dbReference type="Ensembl" id="ENSMUST00000114048.2">
    <property type="protein sequence ID" value="ENSMUSP00000109682.2"/>
    <property type="gene ID" value="ENSMUSG00000079523.9"/>
</dbReference>
<dbReference type="Ensembl" id="ENSMUST00000114049.2">
    <property type="protein sequence ID" value="ENSMUSP00000109683.2"/>
    <property type="gene ID" value="ENSMUSG00000079523.9"/>
</dbReference>
<dbReference type="Ensembl" id="ENSMUST00000114050.8">
    <property type="protein sequence ID" value="ENSMUSP00000109684.2"/>
    <property type="gene ID" value="ENSMUSG00000079523.9"/>
</dbReference>
<dbReference type="Ensembl" id="ENSMUST00000170837.3">
    <property type="protein sequence ID" value="ENSMUSP00000137210.3"/>
    <property type="gene ID" value="ENSMUSG00000091955.3"/>
</dbReference>
<dbReference type="GeneID" id="19240"/>
<dbReference type="KEGG" id="mmu:19240"/>
<dbReference type="UCSC" id="uc009cjf.2">
    <property type="organism name" value="mouse"/>
</dbReference>
<dbReference type="AGR" id="MGI:109146"/>
<dbReference type="CTD" id="9168"/>
<dbReference type="MGI" id="MGI:109146">
    <property type="gene designation" value="Tmsb10"/>
</dbReference>
<dbReference type="VEuPathDB" id="HostDB:ENSMUSG00000079523"/>
<dbReference type="VEuPathDB" id="HostDB:ENSMUSG00000091955"/>
<dbReference type="eggNOG" id="KOG4794">
    <property type="taxonomic scope" value="Eukaryota"/>
</dbReference>
<dbReference type="GeneTree" id="ENSGT00940000163007"/>
<dbReference type="GeneTree" id="ENSGT01130000278559"/>
<dbReference type="HOGENOM" id="CLU_208046_0_1_1"/>
<dbReference type="InParanoid" id="Q6ZWY8"/>
<dbReference type="OrthoDB" id="58627at9989"/>
<dbReference type="PhylomeDB" id="Q6ZWY8"/>
<dbReference type="BioGRID-ORCS" id="19240">
    <property type="hits" value="2 hits in 73 CRISPR screens"/>
</dbReference>
<dbReference type="ChiTaRS" id="Tmsb10">
    <property type="organism name" value="mouse"/>
</dbReference>
<dbReference type="PRO" id="PR:Q6ZWY8"/>
<dbReference type="Proteomes" id="UP000000589">
    <property type="component" value="Chromosome 6"/>
</dbReference>
<dbReference type="Proteomes" id="UP000000589">
    <property type="component" value="Chromosome 7"/>
</dbReference>
<dbReference type="Bgee" id="ENSMUSG00000079523">
    <property type="expression patterns" value="Expressed in embryonic brain and 105 other cell types or tissues"/>
</dbReference>
<dbReference type="ExpressionAtlas" id="Q6ZWY8">
    <property type="expression patterns" value="baseline and differential"/>
</dbReference>
<dbReference type="GO" id="GO:0005737">
    <property type="term" value="C:cytoplasm"/>
    <property type="evidence" value="ECO:0000305"/>
    <property type="project" value="MGI"/>
</dbReference>
<dbReference type="GO" id="GO:0005856">
    <property type="term" value="C:cytoskeleton"/>
    <property type="evidence" value="ECO:0007669"/>
    <property type="project" value="UniProtKB-SubCell"/>
</dbReference>
<dbReference type="GO" id="GO:0003785">
    <property type="term" value="F:actin monomer binding"/>
    <property type="evidence" value="ECO:0000304"/>
    <property type="project" value="MGI"/>
</dbReference>
<dbReference type="GO" id="GO:0030036">
    <property type="term" value="P:actin cytoskeleton organization"/>
    <property type="evidence" value="ECO:0000304"/>
    <property type="project" value="MGI"/>
</dbReference>
<dbReference type="GO" id="GO:0007015">
    <property type="term" value="P:actin filament organization"/>
    <property type="evidence" value="ECO:0007669"/>
    <property type="project" value="InterPro"/>
</dbReference>
<dbReference type="FunFam" id="1.20.5.520:FF:000001">
    <property type="entry name" value="Thymosin beta"/>
    <property type="match status" value="1"/>
</dbReference>
<dbReference type="Gene3D" id="1.20.5.520">
    <property type="entry name" value="Single helix bin"/>
    <property type="match status" value="1"/>
</dbReference>
<dbReference type="InterPro" id="IPR001152">
    <property type="entry name" value="Beta-thymosin"/>
</dbReference>
<dbReference type="InterPro" id="IPR038386">
    <property type="entry name" value="Beta-thymosin_sf"/>
</dbReference>
<dbReference type="PANTHER" id="PTHR12021">
    <property type="entry name" value="THYMOSIN BETA"/>
    <property type="match status" value="1"/>
</dbReference>
<dbReference type="PANTHER" id="PTHR12021:SF10">
    <property type="entry name" value="THYMOSIN BETA-10"/>
    <property type="match status" value="1"/>
</dbReference>
<dbReference type="Pfam" id="PF01290">
    <property type="entry name" value="Thymosin"/>
    <property type="match status" value="1"/>
</dbReference>
<dbReference type="PIRSF" id="PIRSF001828">
    <property type="entry name" value="Thymosin_beta"/>
    <property type="match status" value="1"/>
</dbReference>
<dbReference type="SMART" id="SM00152">
    <property type="entry name" value="THY"/>
    <property type="match status" value="1"/>
</dbReference>
<dbReference type="PROSITE" id="PS00500">
    <property type="entry name" value="THYMOSIN_B4"/>
    <property type="match status" value="1"/>
</dbReference>
<proteinExistence type="evidence at protein level"/>
<protein>
    <recommendedName>
        <fullName>Thymosin beta-10</fullName>
    </recommendedName>
</protein>